<proteinExistence type="evidence at protein level"/>
<reference evidence="4" key="1">
    <citation type="journal article" date="2009" name="BMC Evol. Biol.">
        <title>A proteomic approach for studying insect phylogeny: CAPA peptides of ancient insect taxa (Dictyoptera, Blattoptera) as a test case.</title>
        <authorList>
            <person name="Roth S."/>
            <person name="Fromm B."/>
            <person name="Gaede G."/>
            <person name="Predel R."/>
        </authorList>
    </citation>
    <scope>PROTEIN SEQUENCE</scope>
    <scope>AMIDATION AT ASN-11</scope>
    <source>
        <tissue evidence="2">Abdominal perisympathetic organs</tissue>
    </source>
</reference>
<sequence>GASGLIPVMRN</sequence>
<evidence type="ECO:0000255" key="1"/>
<evidence type="ECO:0000269" key="2">
    <source>
    </source>
</evidence>
<evidence type="ECO:0000303" key="3">
    <source>
    </source>
</evidence>
<evidence type="ECO:0000305" key="4"/>
<protein>
    <recommendedName>
        <fullName evidence="3">Periviscerokinin-1</fullName>
        <shortName evidence="3">NeoRh-PVK-1</shortName>
    </recommendedName>
</protein>
<name>PVK1_NEORO</name>
<keyword id="KW-0027">Amidation</keyword>
<keyword id="KW-0903">Direct protein sequencing</keyword>
<keyword id="KW-0527">Neuropeptide</keyword>
<keyword id="KW-0964">Secreted</keyword>
<accession>P85684</accession>
<organism>
    <name type="scientific">Neostylopyga rhombifolia</name>
    <name type="common">Harlequin cockroach</name>
    <dbReference type="NCBI Taxonomy" id="304879"/>
    <lineage>
        <taxon>Eukaryota</taxon>
        <taxon>Metazoa</taxon>
        <taxon>Ecdysozoa</taxon>
        <taxon>Arthropoda</taxon>
        <taxon>Hexapoda</taxon>
        <taxon>Insecta</taxon>
        <taxon>Pterygota</taxon>
        <taxon>Neoptera</taxon>
        <taxon>Polyneoptera</taxon>
        <taxon>Dictyoptera</taxon>
        <taxon>Blattodea</taxon>
        <taxon>Blattoidea</taxon>
        <taxon>Blattidae</taxon>
        <taxon>Blattinae</taxon>
        <taxon>Neostylopyga</taxon>
    </lineage>
</organism>
<comment type="function">
    <text evidence="4">Mediates visceral muscle contractile activity (myotropic activity).</text>
</comment>
<comment type="subcellular location">
    <subcellularLocation>
        <location evidence="4">Secreted</location>
    </subcellularLocation>
</comment>
<comment type="similarity">
    <text evidence="1">Belongs to the periviscerokinin family.</text>
</comment>
<feature type="peptide" id="PRO_0000378753" description="Periviscerokinin-1" evidence="2">
    <location>
        <begin position="1"/>
        <end position="11"/>
    </location>
</feature>
<feature type="modified residue" description="Asparagine amide" evidence="2">
    <location>
        <position position="11"/>
    </location>
</feature>
<dbReference type="GO" id="GO:0005576">
    <property type="term" value="C:extracellular region"/>
    <property type="evidence" value="ECO:0007669"/>
    <property type="project" value="UniProtKB-SubCell"/>
</dbReference>
<dbReference type="GO" id="GO:0007218">
    <property type="term" value="P:neuropeptide signaling pathway"/>
    <property type="evidence" value="ECO:0007669"/>
    <property type="project" value="UniProtKB-KW"/>
</dbReference>